<name>YCF3_POPTR</name>
<keyword id="KW-0150">Chloroplast</keyword>
<keyword id="KW-0472">Membrane</keyword>
<keyword id="KW-0602">Photosynthesis</keyword>
<keyword id="KW-0934">Plastid</keyword>
<keyword id="KW-1185">Reference proteome</keyword>
<keyword id="KW-0677">Repeat</keyword>
<keyword id="KW-0793">Thylakoid</keyword>
<keyword id="KW-0802">TPR repeat</keyword>
<gene>
    <name evidence="1" type="primary">ycf3</name>
    <name type="ordered locus">Poptr_cp023</name>
</gene>
<dbReference type="EMBL" id="EF489041">
    <property type="protein sequence ID" value="ABO36705.1"/>
    <property type="molecule type" value="Genomic_DNA"/>
</dbReference>
<dbReference type="RefSeq" id="YP_001109502.1">
    <property type="nucleotide sequence ID" value="NC_009143.1"/>
</dbReference>
<dbReference type="SMR" id="A4GYR1"/>
<dbReference type="FunCoup" id="A4GYR1">
    <property type="interactions" value="35"/>
</dbReference>
<dbReference type="STRING" id="3694.A4GYR1"/>
<dbReference type="GeneID" id="4929664"/>
<dbReference type="KEGG" id="pop:4929664"/>
<dbReference type="InParanoid" id="A4GYR1"/>
<dbReference type="OrthoDB" id="431027at2759"/>
<dbReference type="Proteomes" id="UP000006729">
    <property type="component" value="Chloroplast"/>
</dbReference>
<dbReference type="ExpressionAtlas" id="A4GYR1">
    <property type="expression patterns" value="baseline and differential"/>
</dbReference>
<dbReference type="GO" id="GO:0009535">
    <property type="term" value="C:chloroplast thylakoid membrane"/>
    <property type="evidence" value="ECO:0007669"/>
    <property type="project" value="UniProtKB-SubCell"/>
</dbReference>
<dbReference type="GO" id="GO:0048564">
    <property type="term" value="P:photosystem I assembly"/>
    <property type="evidence" value="ECO:0000318"/>
    <property type="project" value="GO_Central"/>
</dbReference>
<dbReference type="FunFam" id="1.25.40.10:FF:000004">
    <property type="entry name" value="Photosystem I assembly protein Ycf3"/>
    <property type="match status" value="1"/>
</dbReference>
<dbReference type="Gene3D" id="1.25.40.10">
    <property type="entry name" value="Tetratricopeptide repeat domain"/>
    <property type="match status" value="1"/>
</dbReference>
<dbReference type="HAMAP" id="MF_00439">
    <property type="entry name" value="Ycf3"/>
    <property type="match status" value="1"/>
</dbReference>
<dbReference type="InterPro" id="IPR022818">
    <property type="entry name" value="PSI_Ycf3_assembly"/>
</dbReference>
<dbReference type="InterPro" id="IPR011990">
    <property type="entry name" value="TPR-like_helical_dom_sf"/>
</dbReference>
<dbReference type="InterPro" id="IPR019734">
    <property type="entry name" value="TPR_rpt"/>
</dbReference>
<dbReference type="InterPro" id="IPR051685">
    <property type="entry name" value="Ycf3/AcsC/BcsC/TPR_MFPF"/>
</dbReference>
<dbReference type="NCBIfam" id="NF002725">
    <property type="entry name" value="PRK02603.1"/>
    <property type="match status" value="1"/>
</dbReference>
<dbReference type="PANTHER" id="PTHR44943">
    <property type="entry name" value="CELLULOSE SYNTHASE OPERON PROTEIN C"/>
    <property type="match status" value="1"/>
</dbReference>
<dbReference type="PANTHER" id="PTHR44943:SF8">
    <property type="entry name" value="TPR REPEAT-CONTAINING PROTEIN MJ0263"/>
    <property type="match status" value="1"/>
</dbReference>
<dbReference type="Pfam" id="PF00515">
    <property type="entry name" value="TPR_1"/>
    <property type="match status" value="1"/>
</dbReference>
<dbReference type="SMART" id="SM00028">
    <property type="entry name" value="TPR"/>
    <property type="match status" value="3"/>
</dbReference>
<dbReference type="SUPFAM" id="SSF48452">
    <property type="entry name" value="TPR-like"/>
    <property type="match status" value="1"/>
</dbReference>
<dbReference type="PROSITE" id="PS50005">
    <property type="entry name" value="TPR"/>
    <property type="match status" value="3"/>
</dbReference>
<dbReference type="PROSITE" id="PS50293">
    <property type="entry name" value="TPR_REGION"/>
    <property type="match status" value="2"/>
</dbReference>
<accession>A4GYR1</accession>
<proteinExistence type="inferred from homology"/>
<evidence type="ECO:0000255" key="1">
    <source>
        <dbReference type="HAMAP-Rule" id="MF_00439"/>
    </source>
</evidence>
<geneLocation type="chloroplast"/>
<organism>
    <name type="scientific">Populus trichocarpa</name>
    <name type="common">Western balsam poplar</name>
    <name type="synonym">Populus balsamifera subsp. trichocarpa</name>
    <dbReference type="NCBI Taxonomy" id="3694"/>
    <lineage>
        <taxon>Eukaryota</taxon>
        <taxon>Viridiplantae</taxon>
        <taxon>Streptophyta</taxon>
        <taxon>Embryophyta</taxon>
        <taxon>Tracheophyta</taxon>
        <taxon>Spermatophyta</taxon>
        <taxon>Magnoliopsida</taxon>
        <taxon>eudicotyledons</taxon>
        <taxon>Gunneridae</taxon>
        <taxon>Pentapetalae</taxon>
        <taxon>rosids</taxon>
        <taxon>fabids</taxon>
        <taxon>Malpighiales</taxon>
        <taxon>Salicaceae</taxon>
        <taxon>Saliceae</taxon>
        <taxon>Populus</taxon>
    </lineage>
</organism>
<sequence>MPRSRITGNLIDKTFSIVANILLRIIPTTSGEKEAFTYYRDGMSAQSEGNYAEALQNYYEAMRLEIDPYDRSYILYNIGLIHTSNGEHTKALEYYFRALERNPFLPQAFNNMAVICHYRGEQAIRQGDSEIAEAWFDQAAEYWKQAIALTPGNYIEAQNWLKITRRFE</sequence>
<reference key="1">
    <citation type="journal article" date="2006" name="Science">
        <title>The genome of black cottonwood, Populus trichocarpa (Torr. &amp; Gray).</title>
        <authorList>
            <person name="Tuskan G.A."/>
            <person name="Difazio S."/>
            <person name="Jansson S."/>
            <person name="Bohlmann J."/>
            <person name="Grigoriev I."/>
            <person name="Hellsten U."/>
            <person name="Putnam N."/>
            <person name="Ralph S."/>
            <person name="Rombauts S."/>
            <person name="Salamov A."/>
            <person name="Schein J."/>
            <person name="Sterck L."/>
            <person name="Aerts A."/>
            <person name="Bhalerao R.R."/>
            <person name="Bhalerao R.P."/>
            <person name="Blaudez D."/>
            <person name="Boerjan W."/>
            <person name="Brun A."/>
            <person name="Brunner A."/>
            <person name="Busov V."/>
            <person name="Campbell M."/>
            <person name="Carlson J."/>
            <person name="Chalot M."/>
            <person name="Chapman J."/>
            <person name="Chen G.-L."/>
            <person name="Cooper D."/>
            <person name="Coutinho P.M."/>
            <person name="Couturier J."/>
            <person name="Covert S."/>
            <person name="Cronk Q."/>
            <person name="Cunningham R."/>
            <person name="Davis J."/>
            <person name="Degroeve S."/>
            <person name="Dejardin A."/>
            <person name="dePamphilis C.W."/>
            <person name="Detter J."/>
            <person name="Dirks B."/>
            <person name="Dubchak I."/>
            <person name="Duplessis S."/>
            <person name="Ehlting J."/>
            <person name="Ellis B."/>
            <person name="Gendler K."/>
            <person name="Goodstein D."/>
            <person name="Gribskov M."/>
            <person name="Grimwood J."/>
            <person name="Groover A."/>
            <person name="Gunter L."/>
            <person name="Hamberger B."/>
            <person name="Heinze B."/>
            <person name="Helariutta Y."/>
            <person name="Henrissat B."/>
            <person name="Holligan D."/>
            <person name="Holt R."/>
            <person name="Huang W."/>
            <person name="Islam-Faridi N."/>
            <person name="Jones S."/>
            <person name="Jones-Rhoades M."/>
            <person name="Jorgensen R."/>
            <person name="Joshi C."/>
            <person name="Kangasjaervi J."/>
            <person name="Karlsson J."/>
            <person name="Kelleher C."/>
            <person name="Kirkpatrick R."/>
            <person name="Kirst M."/>
            <person name="Kohler A."/>
            <person name="Kalluri U."/>
            <person name="Larimer F."/>
            <person name="Leebens-Mack J."/>
            <person name="Leple J.-C."/>
            <person name="Locascio P."/>
            <person name="Lou Y."/>
            <person name="Lucas S."/>
            <person name="Martin F."/>
            <person name="Montanini B."/>
            <person name="Napoli C."/>
            <person name="Nelson D.R."/>
            <person name="Nelson C."/>
            <person name="Nieminen K."/>
            <person name="Nilsson O."/>
            <person name="Pereda V."/>
            <person name="Peter G."/>
            <person name="Philippe R."/>
            <person name="Pilate G."/>
            <person name="Poliakov A."/>
            <person name="Razumovskaya J."/>
            <person name="Richardson P."/>
            <person name="Rinaldi C."/>
            <person name="Ritland K."/>
            <person name="Rouze P."/>
            <person name="Ryaboy D."/>
            <person name="Schmutz J."/>
            <person name="Schrader J."/>
            <person name="Segerman B."/>
            <person name="Shin H."/>
            <person name="Siddiqui A."/>
            <person name="Sterky F."/>
            <person name="Terry A."/>
            <person name="Tsai C.-J."/>
            <person name="Uberbacher E."/>
            <person name="Unneberg P."/>
            <person name="Vahala J."/>
            <person name="Wall K."/>
            <person name="Wessler S."/>
            <person name="Yang G."/>
            <person name="Yin T."/>
            <person name="Douglas C."/>
            <person name="Marra M."/>
            <person name="Sandberg G."/>
            <person name="Van de Peer Y."/>
            <person name="Rokhsar D.S."/>
        </authorList>
    </citation>
    <scope>NUCLEOTIDE SEQUENCE [LARGE SCALE GENOMIC DNA]</scope>
    <source>
        <strain>cv. Nisqually</strain>
    </source>
</reference>
<protein>
    <recommendedName>
        <fullName evidence="1">Photosystem I assembly protein Ycf3</fullName>
    </recommendedName>
</protein>
<feature type="chain" id="PRO_0000325074" description="Photosystem I assembly protein Ycf3">
    <location>
        <begin position="1"/>
        <end position="168"/>
    </location>
</feature>
<feature type="repeat" description="TPR 1">
    <location>
        <begin position="35"/>
        <end position="68"/>
    </location>
</feature>
<feature type="repeat" description="TPR 2">
    <location>
        <begin position="72"/>
        <end position="105"/>
    </location>
</feature>
<feature type="repeat" description="TPR 3">
    <location>
        <begin position="120"/>
        <end position="153"/>
    </location>
</feature>
<comment type="function">
    <text evidence="1">Essential for the assembly of the photosystem I (PSI) complex. May act as a chaperone-like factor to guide the assembly of the PSI subunits.</text>
</comment>
<comment type="subcellular location">
    <subcellularLocation>
        <location evidence="1">Plastid</location>
        <location evidence="1">Chloroplast thylakoid membrane</location>
        <topology evidence="1">Peripheral membrane protein</topology>
    </subcellularLocation>
</comment>
<comment type="similarity">
    <text evidence="1">Belongs to the Ycf3 family.</text>
</comment>